<comment type="function">
    <text evidence="1">Required for maturation of 30S ribosomal subunits.</text>
</comment>
<comment type="subcellular location">
    <subcellularLocation>
        <location evidence="1">Cytoplasm</location>
    </subcellularLocation>
</comment>
<comment type="similarity">
    <text evidence="1">Belongs to the RimP family.</text>
</comment>
<sequence length="156" mass="17696">MDKKVTEVVEAFAQPIVEELNLELVDVEYVKEGQDWFLRVFIDSEKGVDIEECGAVSERLSEALDKEDPIPHLYFLDVSSPGAERPLKKEKDFQQAVGKQVAIKTYEPIDGEKMFEGKMLSYDGTTITLLLTIKTRKKEIQIPMDKVANARLAVTF</sequence>
<proteinExistence type="inferred from homology"/>
<keyword id="KW-0963">Cytoplasm</keyword>
<keyword id="KW-0690">Ribosome biogenesis</keyword>
<feature type="chain" id="PRO_0000181841" description="Ribosome maturation factor RimP">
    <location>
        <begin position="1"/>
        <end position="156"/>
    </location>
</feature>
<dbReference type="EMBL" id="AE017194">
    <property type="protein sequence ID" value="AAS42760.1"/>
    <property type="molecule type" value="Genomic_DNA"/>
</dbReference>
<dbReference type="SMR" id="Q732Q5"/>
<dbReference type="KEGG" id="bca:BCE_3855"/>
<dbReference type="HOGENOM" id="CLU_070525_2_0_9"/>
<dbReference type="Proteomes" id="UP000002527">
    <property type="component" value="Chromosome"/>
</dbReference>
<dbReference type="GO" id="GO:0005829">
    <property type="term" value="C:cytosol"/>
    <property type="evidence" value="ECO:0007669"/>
    <property type="project" value="TreeGrafter"/>
</dbReference>
<dbReference type="GO" id="GO:0000028">
    <property type="term" value="P:ribosomal small subunit assembly"/>
    <property type="evidence" value="ECO:0007669"/>
    <property type="project" value="TreeGrafter"/>
</dbReference>
<dbReference type="GO" id="GO:0006412">
    <property type="term" value="P:translation"/>
    <property type="evidence" value="ECO:0007669"/>
    <property type="project" value="TreeGrafter"/>
</dbReference>
<dbReference type="CDD" id="cd01734">
    <property type="entry name" value="YlxS_C"/>
    <property type="match status" value="1"/>
</dbReference>
<dbReference type="FunFam" id="2.30.30.180:FF:000002">
    <property type="entry name" value="Ribosome maturation factor RimP"/>
    <property type="match status" value="1"/>
</dbReference>
<dbReference type="FunFam" id="3.30.300.70:FF:000001">
    <property type="entry name" value="Ribosome maturation factor RimP"/>
    <property type="match status" value="1"/>
</dbReference>
<dbReference type="Gene3D" id="2.30.30.180">
    <property type="entry name" value="Ribosome maturation factor RimP, C-terminal domain"/>
    <property type="match status" value="1"/>
</dbReference>
<dbReference type="Gene3D" id="3.30.300.70">
    <property type="entry name" value="RimP-like superfamily, N-terminal"/>
    <property type="match status" value="1"/>
</dbReference>
<dbReference type="HAMAP" id="MF_01077">
    <property type="entry name" value="RimP"/>
    <property type="match status" value="1"/>
</dbReference>
<dbReference type="InterPro" id="IPR003728">
    <property type="entry name" value="Ribosome_maturation_RimP"/>
</dbReference>
<dbReference type="InterPro" id="IPR028998">
    <property type="entry name" value="RimP_C"/>
</dbReference>
<dbReference type="InterPro" id="IPR036847">
    <property type="entry name" value="RimP_C_sf"/>
</dbReference>
<dbReference type="InterPro" id="IPR028989">
    <property type="entry name" value="RimP_N"/>
</dbReference>
<dbReference type="InterPro" id="IPR035956">
    <property type="entry name" value="RimP_N_sf"/>
</dbReference>
<dbReference type="NCBIfam" id="NF000928">
    <property type="entry name" value="PRK00092.1-2"/>
    <property type="match status" value="1"/>
</dbReference>
<dbReference type="PANTHER" id="PTHR33867">
    <property type="entry name" value="RIBOSOME MATURATION FACTOR RIMP"/>
    <property type="match status" value="1"/>
</dbReference>
<dbReference type="PANTHER" id="PTHR33867:SF1">
    <property type="entry name" value="RIBOSOME MATURATION FACTOR RIMP"/>
    <property type="match status" value="1"/>
</dbReference>
<dbReference type="Pfam" id="PF17384">
    <property type="entry name" value="DUF150_C"/>
    <property type="match status" value="1"/>
</dbReference>
<dbReference type="Pfam" id="PF02576">
    <property type="entry name" value="RimP_N"/>
    <property type="match status" value="1"/>
</dbReference>
<dbReference type="SUPFAM" id="SSF74942">
    <property type="entry name" value="YhbC-like, C-terminal domain"/>
    <property type="match status" value="1"/>
</dbReference>
<dbReference type="SUPFAM" id="SSF75420">
    <property type="entry name" value="YhbC-like, N-terminal domain"/>
    <property type="match status" value="1"/>
</dbReference>
<evidence type="ECO:0000255" key="1">
    <source>
        <dbReference type="HAMAP-Rule" id="MF_01077"/>
    </source>
</evidence>
<reference key="1">
    <citation type="journal article" date="2004" name="Nucleic Acids Res.">
        <title>The genome sequence of Bacillus cereus ATCC 10987 reveals metabolic adaptations and a large plasmid related to Bacillus anthracis pXO1.</title>
        <authorList>
            <person name="Rasko D.A."/>
            <person name="Ravel J."/>
            <person name="Oekstad O.A."/>
            <person name="Helgason E."/>
            <person name="Cer R.Z."/>
            <person name="Jiang L."/>
            <person name="Shores K.A."/>
            <person name="Fouts D.E."/>
            <person name="Tourasse N.J."/>
            <person name="Angiuoli S.V."/>
            <person name="Kolonay J.F."/>
            <person name="Nelson W.C."/>
            <person name="Kolstoe A.-B."/>
            <person name="Fraser C.M."/>
            <person name="Read T.D."/>
        </authorList>
    </citation>
    <scope>NUCLEOTIDE SEQUENCE [LARGE SCALE GENOMIC DNA]</scope>
    <source>
        <strain>ATCC 10987 / NRS 248</strain>
    </source>
</reference>
<gene>
    <name evidence="1" type="primary">rimP</name>
    <name type="ordered locus">BCE_3855</name>
</gene>
<protein>
    <recommendedName>
        <fullName evidence="1">Ribosome maturation factor RimP</fullName>
    </recommendedName>
</protein>
<name>RIMP_BACC1</name>
<accession>Q732Q5</accession>
<organism>
    <name type="scientific">Bacillus cereus (strain ATCC 10987 / NRS 248)</name>
    <dbReference type="NCBI Taxonomy" id="222523"/>
    <lineage>
        <taxon>Bacteria</taxon>
        <taxon>Bacillati</taxon>
        <taxon>Bacillota</taxon>
        <taxon>Bacilli</taxon>
        <taxon>Bacillales</taxon>
        <taxon>Bacillaceae</taxon>
        <taxon>Bacillus</taxon>
        <taxon>Bacillus cereus group</taxon>
    </lineage>
</organism>